<sequence>MSKRKSAKYKLDRRMGENIWGRPNSPVNKRSYGPGQHGQRRKGKTSDFGLQLRAKQKLKGYYGDVTEKQFRRTYAEASRMKGDTGQNLIGLLEQRLDMVVYRAKFAPTVFAARQIVNHGHIYVNGVKTNIPSARVKVGDVISLGNKAKEMALVIEAQSLPEREIPDYVAPDGNDKVTFTRVPKLDEVPYPVTMEPNLVVEFYSR</sequence>
<accession>Q2NAS6</accession>
<keyword id="KW-1185">Reference proteome</keyword>
<keyword id="KW-0687">Ribonucleoprotein</keyword>
<keyword id="KW-0689">Ribosomal protein</keyword>
<keyword id="KW-0694">RNA-binding</keyword>
<keyword id="KW-0699">rRNA-binding</keyword>
<reference key="1">
    <citation type="journal article" date="2009" name="J. Bacteriol.">
        <title>Complete genome sequence of Erythrobacter litoralis HTCC2594.</title>
        <authorList>
            <person name="Oh H.M."/>
            <person name="Giovannoni S.J."/>
            <person name="Ferriera S."/>
            <person name="Johnson J."/>
            <person name="Cho J.C."/>
        </authorList>
    </citation>
    <scope>NUCLEOTIDE SEQUENCE [LARGE SCALE GENOMIC DNA]</scope>
    <source>
        <strain>HTCC2594</strain>
    </source>
</reference>
<organism>
    <name type="scientific">Erythrobacter litoralis (strain HTCC2594)</name>
    <dbReference type="NCBI Taxonomy" id="314225"/>
    <lineage>
        <taxon>Bacteria</taxon>
        <taxon>Pseudomonadati</taxon>
        <taxon>Pseudomonadota</taxon>
        <taxon>Alphaproteobacteria</taxon>
        <taxon>Sphingomonadales</taxon>
        <taxon>Erythrobacteraceae</taxon>
        <taxon>Erythrobacter/Porphyrobacter group</taxon>
        <taxon>Erythrobacter</taxon>
    </lineage>
</organism>
<feature type="chain" id="PRO_0000293276" description="Small ribosomal subunit protein uS4">
    <location>
        <begin position="1"/>
        <end position="204"/>
    </location>
</feature>
<feature type="domain" description="S4 RNA-binding" evidence="1">
    <location>
        <begin position="94"/>
        <end position="154"/>
    </location>
</feature>
<feature type="region of interest" description="Disordered" evidence="2">
    <location>
        <begin position="1"/>
        <end position="49"/>
    </location>
</feature>
<comment type="function">
    <text evidence="1">One of the primary rRNA binding proteins, it binds directly to 16S rRNA where it nucleates assembly of the body of the 30S subunit.</text>
</comment>
<comment type="function">
    <text evidence="1">With S5 and S12 plays an important role in translational accuracy.</text>
</comment>
<comment type="subunit">
    <text evidence="1">Part of the 30S ribosomal subunit. Contacts protein S5. The interaction surface between S4 and S5 is involved in control of translational fidelity.</text>
</comment>
<comment type="similarity">
    <text evidence="1">Belongs to the universal ribosomal protein uS4 family.</text>
</comment>
<proteinExistence type="inferred from homology"/>
<dbReference type="EMBL" id="CP000157">
    <property type="protein sequence ID" value="ABC63215.1"/>
    <property type="molecule type" value="Genomic_DNA"/>
</dbReference>
<dbReference type="RefSeq" id="WP_011414051.1">
    <property type="nucleotide sequence ID" value="NC_007722.1"/>
</dbReference>
<dbReference type="SMR" id="Q2NAS6"/>
<dbReference type="STRING" id="314225.ELI_05615"/>
<dbReference type="KEGG" id="eli:ELI_05615"/>
<dbReference type="eggNOG" id="COG0522">
    <property type="taxonomic scope" value="Bacteria"/>
</dbReference>
<dbReference type="HOGENOM" id="CLU_092403_0_0_5"/>
<dbReference type="OrthoDB" id="9803672at2"/>
<dbReference type="Proteomes" id="UP000008808">
    <property type="component" value="Chromosome"/>
</dbReference>
<dbReference type="GO" id="GO:0015935">
    <property type="term" value="C:small ribosomal subunit"/>
    <property type="evidence" value="ECO:0007669"/>
    <property type="project" value="InterPro"/>
</dbReference>
<dbReference type="GO" id="GO:0019843">
    <property type="term" value="F:rRNA binding"/>
    <property type="evidence" value="ECO:0007669"/>
    <property type="project" value="UniProtKB-UniRule"/>
</dbReference>
<dbReference type="GO" id="GO:0003735">
    <property type="term" value="F:structural constituent of ribosome"/>
    <property type="evidence" value="ECO:0007669"/>
    <property type="project" value="InterPro"/>
</dbReference>
<dbReference type="GO" id="GO:0042274">
    <property type="term" value="P:ribosomal small subunit biogenesis"/>
    <property type="evidence" value="ECO:0007669"/>
    <property type="project" value="TreeGrafter"/>
</dbReference>
<dbReference type="GO" id="GO:0006412">
    <property type="term" value="P:translation"/>
    <property type="evidence" value="ECO:0007669"/>
    <property type="project" value="UniProtKB-UniRule"/>
</dbReference>
<dbReference type="CDD" id="cd00165">
    <property type="entry name" value="S4"/>
    <property type="match status" value="1"/>
</dbReference>
<dbReference type="FunFam" id="3.10.290.10:FF:000001">
    <property type="entry name" value="30S ribosomal protein S4"/>
    <property type="match status" value="1"/>
</dbReference>
<dbReference type="Gene3D" id="1.10.1050.10">
    <property type="entry name" value="Ribosomal Protein S4 Delta 41, Chain A, domain 1"/>
    <property type="match status" value="1"/>
</dbReference>
<dbReference type="Gene3D" id="3.10.290.10">
    <property type="entry name" value="RNA-binding S4 domain"/>
    <property type="match status" value="1"/>
</dbReference>
<dbReference type="HAMAP" id="MF_01306_B">
    <property type="entry name" value="Ribosomal_uS4_B"/>
    <property type="match status" value="1"/>
</dbReference>
<dbReference type="InterPro" id="IPR022801">
    <property type="entry name" value="Ribosomal_uS4"/>
</dbReference>
<dbReference type="InterPro" id="IPR005709">
    <property type="entry name" value="Ribosomal_uS4_bac-type"/>
</dbReference>
<dbReference type="InterPro" id="IPR018079">
    <property type="entry name" value="Ribosomal_uS4_CS"/>
</dbReference>
<dbReference type="InterPro" id="IPR001912">
    <property type="entry name" value="Ribosomal_uS4_N"/>
</dbReference>
<dbReference type="InterPro" id="IPR002942">
    <property type="entry name" value="S4_RNA-bd"/>
</dbReference>
<dbReference type="InterPro" id="IPR036986">
    <property type="entry name" value="S4_RNA-bd_sf"/>
</dbReference>
<dbReference type="NCBIfam" id="NF003717">
    <property type="entry name" value="PRK05327.1"/>
    <property type="match status" value="1"/>
</dbReference>
<dbReference type="NCBIfam" id="TIGR01017">
    <property type="entry name" value="rpsD_bact"/>
    <property type="match status" value="1"/>
</dbReference>
<dbReference type="PANTHER" id="PTHR11831">
    <property type="entry name" value="30S 40S RIBOSOMAL PROTEIN"/>
    <property type="match status" value="1"/>
</dbReference>
<dbReference type="PANTHER" id="PTHR11831:SF4">
    <property type="entry name" value="SMALL RIBOSOMAL SUBUNIT PROTEIN US4M"/>
    <property type="match status" value="1"/>
</dbReference>
<dbReference type="Pfam" id="PF00163">
    <property type="entry name" value="Ribosomal_S4"/>
    <property type="match status" value="1"/>
</dbReference>
<dbReference type="Pfam" id="PF01479">
    <property type="entry name" value="S4"/>
    <property type="match status" value="1"/>
</dbReference>
<dbReference type="SMART" id="SM01390">
    <property type="entry name" value="Ribosomal_S4"/>
    <property type="match status" value="1"/>
</dbReference>
<dbReference type="SMART" id="SM00363">
    <property type="entry name" value="S4"/>
    <property type="match status" value="1"/>
</dbReference>
<dbReference type="SUPFAM" id="SSF55174">
    <property type="entry name" value="Alpha-L RNA-binding motif"/>
    <property type="match status" value="1"/>
</dbReference>
<dbReference type="PROSITE" id="PS00632">
    <property type="entry name" value="RIBOSOMAL_S4"/>
    <property type="match status" value="1"/>
</dbReference>
<dbReference type="PROSITE" id="PS50889">
    <property type="entry name" value="S4"/>
    <property type="match status" value="1"/>
</dbReference>
<gene>
    <name evidence="1" type="primary">rpsD</name>
    <name type="ordered locus">ELI_05615</name>
</gene>
<protein>
    <recommendedName>
        <fullName evidence="1">Small ribosomal subunit protein uS4</fullName>
    </recommendedName>
    <alternativeName>
        <fullName evidence="3">30S ribosomal protein S4</fullName>
    </alternativeName>
</protein>
<name>RS4_ERYLH</name>
<evidence type="ECO:0000255" key="1">
    <source>
        <dbReference type="HAMAP-Rule" id="MF_01306"/>
    </source>
</evidence>
<evidence type="ECO:0000256" key="2">
    <source>
        <dbReference type="SAM" id="MobiDB-lite"/>
    </source>
</evidence>
<evidence type="ECO:0000305" key="3"/>